<feature type="chain" id="PRO_0000411591" description="DNA gyrase subunit A">
    <location>
        <begin position="1"/>
        <end position="828"/>
    </location>
</feature>
<feature type="domain" description="Topo IIA-type catalytic" evidence="2">
    <location>
        <begin position="32"/>
        <end position="497"/>
    </location>
</feature>
<feature type="short sequence motif" description="GyrA-box" evidence="1">
    <location>
        <begin position="524"/>
        <end position="530"/>
    </location>
</feature>
<feature type="active site" description="O-(5'-phospho-DNA)-tyrosine intermediate" evidence="1">
    <location>
        <position position="120"/>
    </location>
</feature>
<accession>P0DG03</accession>
<accession>Q79X71</accession>
<accession>Q8K7H2</accession>
<organism>
    <name type="scientific">Streptococcus pyogenes serotype M3 (strain SSI-1)</name>
    <dbReference type="NCBI Taxonomy" id="193567"/>
    <lineage>
        <taxon>Bacteria</taxon>
        <taxon>Bacillati</taxon>
        <taxon>Bacillota</taxon>
        <taxon>Bacilli</taxon>
        <taxon>Lactobacillales</taxon>
        <taxon>Streptococcaceae</taxon>
        <taxon>Streptococcus</taxon>
    </lineage>
</organism>
<protein>
    <recommendedName>
        <fullName evidence="1">DNA gyrase subunit A</fullName>
        <ecNumber evidence="1">5.6.2.2</ecNumber>
    </recommendedName>
</protein>
<reference key="1">
    <citation type="journal article" date="2003" name="Genome Res.">
        <title>Genome sequence of an M3 strain of Streptococcus pyogenes reveals a large-scale genomic rearrangement in invasive strains and new insights into phage evolution.</title>
        <authorList>
            <person name="Nakagawa I."/>
            <person name="Kurokawa K."/>
            <person name="Yamashita A."/>
            <person name="Nakata M."/>
            <person name="Tomiyasu Y."/>
            <person name="Okahashi N."/>
            <person name="Kawabata S."/>
            <person name="Yamazaki K."/>
            <person name="Shiba T."/>
            <person name="Yasunaga T."/>
            <person name="Hayashi H."/>
            <person name="Hattori M."/>
            <person name="Hamada S."/>
        </authorList>
    </citation>
    <scope>NUCLEOTIDE SEQUENCE [LARGE SCALE GENOMIC DNA]</scope>
    <source>
        <strain>SSI-1</strain>
    </source>
</reference>
<sequence>MQDRNLIDVNLTSEMKTSFIDYAMSVIVARALPDVRDGLKPVHRRILYGMNELGVTPDKPHKKSARITGDVMGKYHPHGDSSIYEAMVRMAQWWSYRHMLVDGHGNFGSMDGDGAAAQRYTEARMSKIALELLRDINKNTVNFQDNYDGSEREPVVLPARFPNLLVNGATGIAVGMATNIPPHNLAESIDAVKMVMEHPDCTTRELMEVIPGPDFPTGALVMGRSGIHRAYDTGKGSIVLRSRTEIETTQTGRERIVVTEFPYGVNKTKVHEHIVRLAQEKRLEGITAVRDESSREGVRFVIEIRREASATVILNNLFKLTSLQTNFSFNMLAIENGVPKILSLRQIIDNYISHQKEVIIRRTRFDKDKAEARAHILEGLLIALDHLDEVIAIIRNSETDVIAQTELMSRFDLSERQSQAILDMRLRRLTGLERDKIQSEYDDLLALIADLSDILAKPERIITIIKEEMDEIKRKYANPRRTELMVGEVLSLEDEDLIEEEDVLITLSNKGYIKRLAQDEFRAQKRGGRGVQGTGVNNDDFVRELVSTSTHDTLLFFTNFGRVYRLKAYEIPEYGRTAKGLPIVNLLKLEDGETIQTIINARKEETAGKSFFFTTKQGIVKRTEVSEFNNIRQNGLRALKLKEGDQLINVLLTSGQDDIIIGTHSGYSVRFNEASIRNMGRSATGVRGVKLREDDRVVGASRIQDNQEVLVITENGFGKRTSATDYPTKGRGGKGIKTANITPKNGQLAGLVTVDGTEDIMVITNKGVIIRTNVANISQTGRATLGVKIMKLDADAKIVTFTLVQPEDSSIAEINTDRENSISKNKDN</sequence>
<proteinExistence type="inferred from homology"/>
<gene>
    <name evidence="1" type="primary">gyrA</name>
    <name type="ordered locus">SPs1009</name>
</gene>
<evidence type="ECO:0000255" key="1">
    <source>
        <dbReference type="HAMAP-Rule" id="MF_01897"/>
    </source>
</evidence>
<evidence type="ECO:0000255" key="2">
    <source>
        <dbReference type="PROSITE-ProRule" id="PRU01384"/>
    </source>
</evidence>
<keyword id="KW-0067">ATP-binding</keyword>
<keyword id="KW-0963">Cytoplasm</keyword>
<keyword id="KW-0238">DNA-binding</keyword>
<keyword id="KW-0413">Isomerase</keyword>
<keyword id="KW-0547">Nucleotide-binding</keyword>
<keyword id="KW-0799">Topoisomerase</keyword>
<comment type="function">
    <text evidence="1">A type II topoisomerase that negatively supercoils closed circular double-stranded (ds) DNA in an ATP-dependent manner to modulate DNA topology and maintain chromosomes in an underwound state. Negative supercoiling favors strand separation, and DNA replication, transcription, recombination and repair, all of which involve strand separation. Also able to catalyze the interconversion of other topological isomers of dsDNA rings, including catenanes and knotted rings. Type II topoisomerases break and join 2 DNA strands simultaneously in an ATP-dependent manner.</text>
</comment>
<comment type="catalytic activity">
    <reaction evidence="1">
        <text>ATP-dependent breakage, passage and rejoining of double-stranded DNA.</text>
        <dbReference type="EC" id="5.6.2.2"/>
    </reaction>
</comment>
<comment type="subunit">
    <text evidence="1">Heterotetramer, composed of two GyrA and two GyrB chains. In the heterotetramer, GyrA contains the active site tyrosine that forms a transient covalent intermediate with DNA, while GyrB binds cofactors and catalyzes ATP hydrolysis.</text>
</comment>
<comment type="subcellular location">
    <subcellularLocation>
        <location evidence="1">Cytoplasm</location>
    </subcellularLocation>
</comment>
<comment type="miscellaneous">
    <text evidence="1">Few gyrases are as efficient as E.coli at forming negative supercoils. Not all organisms have 2 type II topoisomerases; in organisms with a single type II topoisomerase this enzyme also has to decatenate newly replicated chromosomes.</text>
</comment>
<comment type="similarity">
    <text evidence="1">Belongs to the type II topoisomerase GyrA/ParC subunit family.</text>
</comment>
<dbReference type="EC" id="5.6.2.2" evidence="1"/>
<dbReference type="EMBL" id="BA000034">
    <property type="protein sequence ID" value="BAC64104.1"/>
    <property type="molecule type" value="Genomic_DNA"/>
</dbReference>
<dbReference type="RefSeq" id="WP_011054496.1">
    <property type="nucleotide sequence ID" value="NC_004606.1"/>
</dbReference>
<dbReference type="SMR" id="P0DG03"/>
<dbReference type="GeneID" id="69900861"/>
<dbReference type="KEGG" id="sps:SPs1009"/>
<dbReference type="HOGENOM" id="CLU_002977_6_1_9"/>
<dbReference type="GO" id="GO:0005694">
    <property type="term" value="C:chromosome"/>
    <property type="evidence" value="ECO:0007669"/>
    <property type="project" value="InterPro"/>
</dbReference>
<dbReference type="GO" id="GO:0005737">
    <property type="term" value="C:cytoplasm"/>
    <property type="evidence" value="ECO:0007669"/>
    <property type="project" value="UniProtKB-SubCell"/>
</dbReference>
<dbReference type="GO" id="GO:0009330">
    <property type="term" value="C:DNA topoisomerase type II (double strand cut, ATP-hydrolyzing) complex"/>
    <property type="evidence" value="ECO:0007669"/>
    <property type="project" value="TreeGrafter"/>
</dbReference>
<dbReference type="GO" id="GO:0005524">
    <property type="term" value="F:ATP binding"/>
    <property type="evidence" value="ECO:0007669"/>
    <property type="project" value="UniProtKB-UniRule"/>
</dbReference>
<dbReference type="GO" id="GO:0003677">
    <property type="term" value="F:DNA binding"/>
    <property type="evidence" value="ECO:0007669"/>
    <property type="project" value="UniProtKB-UniRule"/>
</dbReference>
<dbReference type="GO" id="GO:0034335">
    <property type="term" value="F:DNA negative supercoiling activity"/>
    <property type="evidence" value="ECO:0007669"/>
    <property type="project" value="UniProtKB-ARBA"/>
</dbReference>
<dbReference type="GO" id="GO:0006265">
    <property type="term" value="P:DNA topological change"/>
    <property type="evidence" value="ECO:0007669"/>
    <property type="project" value="UniProtKB-UniRule"/>
</dbReference>
<dbReference type="GO" id="GO:0006261">
    <property type="term" value="P:DNA-templated DNA replication"/>
    <property type="evidence" value="ECO:0007669"/>
    <property type="project" value="UniProtKB-UniRule"/>
</dbReference>
<dbReference type="CDD" id="cd00187">
    <property type="entry name" value="TOP4c"/>
    <property type="match status" value="1"/>
</dbReference>
<dbReference type="FunFam" id="1.10.268.10:FF:000001">
    <property type="entry name" value="DNA gyrase subunit A"/>
    <property type="match status" value="1"/>
</dbReference>
<dbReference type="FunFam" id="2.120.10.90:FF:000004">
    <property type="entry name" value="DNA gyrase subunit A"/>
    <property type="match status" value="1"/>
</dbReference>
<dbReference type="FunFam" id="3.30.1360.40:FF:000002">
    <property type="entry name" value="DNA gyrase subunit A"/>
    <property type="match status" value="1"/>
</dbReference>
<dbReference type="FunFam" id="3.90.199.10:FF:000001">
    <property type="entry name" value="DNA gyrase subunit A"/>
    <property type="match status" value="1"/>
</dbReference>
<dbReference type="Gene3D" id="3.30.1360.40">
    <property type="match status" value="1"/>
</dbReference>
<dbReference type="Gene3D" id="2.120.10.90">
    <property type="entry name" value="DNA gyrase/topoisomerase IV, subunit A, C-terminal"/>
    <property type="match status" value="1"/>
</dbReference>
<dbReference type="Gene3D" id="3.90.199.10">
    <property type="entry name" value="Topoisomerase II, domain 5"/>
    <property type="match status" value="1"/>
</dbReference>
<dbReference type="Gene3D" id="1.10.268.10">
    <property type="entry name" value="Topoisomerase, domain 3"/>
    <property type="match status" value="1"/>
</dbReference>
<dbReference type="HAMAP" id="MF_01897">
    <property type="entry name" value="GyrA"/>
    <property type="match status" value="1"/>
</dbReference>
<dbReference type="InterPro" id="IPR005743">
    <property type="entry name" value="GyrA"/>
</dbReference>
<dbReference type="InterPro" id="IPR006691">
    <property type="entry name" value="GyrA/parC_rep"/>
</dbReference>
<dbReference type="InterPro" id="IPR035516">
    <property type="entry name" value="Gyrase/topoIV_suA_C"/>
</dbReference>
<dbReference type="InterPro" id="IPR013760">
    <property type="entry name" value="Topo_IIA-like_dom_sf"/>
</dbReference>
<dbReference type="InterPro" id="IPR013758">
    <property type="entry name" value="Topo_IIA_A/C_ab"/>
</dbReference>
<dbReference type="InterPro" id="IPR013757">
    <property type="entry name" value="Topo_IIA_A_a_sf"/>
</dbReference>
<dbReference type="InterPro" id="IPR002205">
    <property type="entry name" value="Topo_IIA_dom_A"/>
</dbReference>
<dbReference type="InterPro" id="IPR050220">
    <property type="entry name" value="Type_II_DNA_Topoisomerases"/>
</dbReference>
<dbReference type="NCBIfam" id="TIGR01063">
    <property type="entry name" value="gyrA"/>
    <property type="match status" value="1"/>
</dbReference>
<dbReference type="NCBIfam" id="NF004043">
    <property type="entry name" value="PRK05560.1"/>
    <property type="match status" value="1"/>
</dbReference>
<dbReference type="NCBIfam" id="NF004044">
    <property type="entry name" value="PRK05561.1"/>
    <property type="match status" value="1"/>
</dbReference>
<dbReference type="PANTHER" id="PTHR43493:SF5">
    <property type="entry name" value="DNA GYRASE SUBUNIT A, CHLOROPLASTIC_MITOCHONDRIAL"/>
    <property type="match status" value="1"/>
</dbReference>
<dbReference type="PANTHER" id="PTHR43493">
    <property type="entry name" value="DNA GYRASE/TOPOISOMERASE SUBUNIT A"/>
    <property type="match status" value="1"/>
</dbReference>
<dbReference type="Pfam" id="PF03989">
    <property type="entry name" value="DNA_gyraseA_C"/>
    <property type="match status" value="6"/>
</dbReference>
<dbReference type="Pfam" id="PF00521">
    <property type="entry name" value="DNA_topoisoIV"/>
    <property type="match status" value="1"/>
</dbReference>
<dbReference type="SMART" id="SM00434">
    <property type="entry name" value="TOP4c"/>
    <property type="match status" value="1"/>
</dbReference>
<dbReference type="SUPFAM" id="SSF101904">
    <property type="entry name" value="GyrA/ParC C-terminal domain-like"/>
    <property type="match status" value="1"/>
</dbReference>
<dbReference type="SUPFAM" id="SSF56719">
    <property type="entry name" value="Type II DNA topoisomerase"/>
    <property type="match status" value="1"/>
</dbReference>
<dbReference type="PROSITE" id="PS52040">
    <property type="entry name" value="TOPO_IIA"/>
    <property type="match status" value="1"/>
</dbReference>
<name>GYRA_STRPQ</name>